<comment type="function">
    <text evidence="1">Ligates lysine onto the cytidine present at position 34 of the AUA codon-specific tRNA(Ile) that contains the anticodon CAU, in an ATP-dependent manner. Cytidine is converted to lysidine, thus changing the amino acid specificity of the tRNA from methionine to isoleucine.</text>
</comment>
<comment type="catalytic activity">
    <reaction evidence="1">
        <text>cytidine(34) in tRNA(Ile2) + L-lysine + ATP = lysidine(34) in tRNA(Ile2) + AMP + diphosphate + H(+)</text>
        <dbReference type="Rhea" id="RHEA:43744"/>
        <dbReference type="Rhea" id="RHEA-COMP:10625"/>
        <dbReference type="Rhea" id="RHEA-COMP:10670"/>
        <dbReference type="ChEBI" id="CHEBI:15378"/>
        <dbReference type="ChEBI" id="CHEBI:30616"/>
        <dbReference type="ChEBI" id="CHEBI:32551"/>
        <dbReference type="ChEBI" id="CHEBI:33019"/>
        <dbReference type="ChEBI" id="CHEBI:82748"/>
        <dbReference type="ChEBI" id="CHEBI:83665"/>
        <dbReference type="ChEBI" id="CHEBI:456215"/>
        <dbReference type="EC" id="6.3.4.19"/>
    </reaction>
</comment>
<comment type="subcellular location">
    <subcellularLocation>
        <location evidence="1">Cytoplasm</location>
    </subcellularLocation>
</comment>
<comment type="domain">
    <text>The N-terminal region contains the highly conserved SGGXDS motif, predicted to be a P-loop motif involved in ATP binding.</text>
</comment>
<comment type="similarity">
    <text evidence="1">Belongs to the tRNA(Ile)-lysidine synthase family.</text>
</comment>
<protein>
    <recommendedName>
        <fullName evidence="1">tRNA(Ile)-lysidine synthase</fullName>
        <ecNumber evidence="1">6.3.4.19</ecNumber>
    </recommendedName>
    <alternativeName>
        <fullName evidence="1">tRNA(Ile)-2-lysyl-cytidine synthase</fullName>
    </alternativeName>
    <alternativeName>
        <fullName evidence="1">tRNA(Ile)-lysidine synthetase</fullName>
    </alternativeName>
</protein>
<proteinExistence type="inferred from homology"/>
<evidence type="ECO:0000255" key="1">
    <source>
        <dbReference type="HAMAP-Rule" id="MF_01161"/>
    </source>
</evidence>
<gene>
    <name evidence="1" type="primary">tilS</name>
    <name type="ordered locus">RER_06200</name>
</gene>
<accession>C0ZNS6</accession>
<keyword id="KW-0067">ATP-binding</keyword>
<keyword id="KW-0963">Cytoplasm</keyword>
<keyword id="KW-0436">Ligase</keyword>
<keyword id="KW-0547">Nucleotide-binding</keyword>
<keyword id="KW-0819">tRNA processing</keyword>
<reference key="1">
    <citation type="submission" date="2005-03" db="EMBL/GenBank/DDBJ databases">
        <title>Comparison of the complete genome sequences of Rhodococcus erythropolis PR4 and Rhodococcus opacus B4.</title>
        <authorList>
            <person name="Takarada H."/>
            <person name="Sekine M."/>
            <person name="Hosoyama A."/>
            <person name="Yamada R."/>
            <person name="Fujisawa T."/>
            <person name="Omata S."/>
            <person name="Shimizu A."/>
            <person name="Tsukatani N."/>
            <person name="Tanikawa S."/>
            <person name="Fujita N."/>
            <person name="Harayama S."/>
        </authorList>
    </citation>
    <scope>NUCLEOTIDE SEQUENCE [LARGE SCALE GENOMIC DNA]</scope>
    <source>
        <strain>PR4 / NBRC 100887</strain>
    </source>
</reference>
<name>TILS_RHOE4</name>
<sequence length="325" mass="34603">MLLPETPALLALRQAVRAWTVAFEPRRRVVVALSGGADSLALTAAAVAETDSVDALIVDHRLQPGSDAVARSAADQALALGCRTATVLTVDVAEGGSLEAAAREARYSALRDARTDLPVLLGHTLDDQAETVLLGLSRGSGGRSIQGMAAFDAPWGRPLLGIRRSVTRAACVDLGITPWEDPHNNNPEFTRVRLRHEALPLLEEILGGGVAEALARTATQLREDGEALDEYAEALLLRAVVDGEVEVDTLAEAPTAIRRRALRAWLLQGGAKALTDKQLRAVDALVIDWRGQGGVAIGGGTPEARLVAARRRGRLILGFEDRRRV</sequence>
<dbReference type="EC" id="6.3.4.19" evidence="1"/>
<dbReference type="EMBL" id="AP008957">
    <property type="protein sequence ID" value="BAH31328.1"/>
    <property type="molecule type" value="Genomic_DNA"/>
</dbReference>
<dbReference type="RefSeq" id="WP_020906067.1">
    <property type="nucleotide sequence ID" value="NC_012490.1"/>
</dbReference>
<dbReference type="SMR" id="C0ZNS6"/>
<dbReference type="KEGG" id="rer:RER_06200"/>
<dbReference type="PATRIC" id="fig|234621.6.peg.1067"/>
<dbReference type="eggNOG" id="COG0037">
    <property type="taxonomic scope" value="Bacteria"/>
</dbReference>
<dbReference type="HOGENOM" id="CLU_018869_1_1_11"/>
<dbReference type="Proteomes" id="UP000002204">
    <property type="component" value="Chromosome"/>
</dbReference>
<dbReference type="GO" id="GO:0005737">
    <property type="term" value="C:cytoplasm"/>
    <property type="evidence" value="ECO:0007669"/>
    <property type="project" value="UniProtKB-SubCell"/>
</dbReference>
<dbReference type="GO" id="GO:0005524">
    <property type="term" value="F:ATP binding"/>
    <property type="evidence" value="ECO:0007669"/>
    <property type="project" value="UniProtKB-UniRule"/>
</dbReference>
<dbReference type="GO" id="GO:0032267">
    <property type="term" value="F:tRNA(Ile)-lysidine synthase activity"/>
    <property type="evidence" value="ECO:0007669"/>
    <property type="project" value="UniProtKB-EC"/>
</dbReference>
<dbReference type="GO" id="GO:0006400">
    <property type="term" value="P:tRNA modification"/>
    <property type="evidence" value="ECO:0007669"/>
    <property type="project" value="UniProtKB-UniRule"/>
</dbReference>
<dbReference type="CDD" id="cd01992">
    <property type="entry name" value="TilS_N"/>
    <property type="match status" value="1"/>
</dbReference>
<dbReference type="Gene3D" id="1.20.59.20">
    <property type="match status" value="1"/>
</dbReference>
<dbReference type="Gene3D" id="3.40.50.620">
    <property type="entry name" value="HUPs"/>
    <property type="match status" value="1"/>
</dbReference>
<dbReference type="HAMAP" id="MF_01161">
    <property type="entry name" value="tRNA_Ile_lys_synt"/>
    <property type="match status" value="1"/>
</dbReference>
<dbReference type="InterPro" id="IPR014729">
    <property type="entry name" value="Rossmann-like_a/b/a_fold"/>
</dbReference>
<dbReference type="InterPro" id="IPR011063">
    <property type="entry name" value="TilS/TtcA_N"/>
</dbReference>
<dbReference type="InterPro" id="IPR012094">
    <property type="entry name" value="tRNA_Ile_lys_synt"/>
</dbReference>
<dbReference type="InterPro" id="IPR012795">
    <property type="entry name" value="tRNA_Ile_lys_synt_N"/>
</dbReference>
<dbReference type="InterPro" id="IPR015262">
    <property type="entry name" value="tRNA_Ile_lys_synt_subst-bd"/>
</dbReference>
<dbReference type="NCBIfam" id="TIGR02432">
    <property type="entry name" value="lysidine_TilS_N"/>
    <property type="match status" value="1"/>
</dbReference>
<dbReference type="PANTHER" id="PTHR43033">
    <property type="entry name" value="TRNA(ILE)-LYSIDINE SYNTHASE-RELATED"/>
    <property type="match status" value="1"/>
</dbReference>
<dbReference type="PANTHER" id="PTHR43033:SF1">
    <property type="entry name" value="TRNA(ILE)-LYSIDINE SYNTHASE-RELATED"/>
    <property type="match status" value="1"/>
</dbReference>
<dbReference type="Pfam" id="PF01171">
    <property type="entry name" value="ATP_bind_3"/>
    <property type="match status" value="1"/>
</dbReference>
<dbReference type="Pfam" id="PF09179">
    <property type="entry name" value="TilS"/>
    <property type="match status" value="1"/>
</dbReference>
<dbReference type="SUPFAM" id="SSF52402">
    <property type="entry name" value="Adenine nucleotide alpha hydrolases-like"/>
    <property type="match status" value="1"/>
</dbReference>
<dbReference type="SUPFAM" id="SSF82829">
    <property type="entry name" value="MesJ substrate recognition domain-like"/>
    <property type="match status" value="1"/>
</dbReference>
<organism>
    <name type="scientific">Rhodococcus erythropolis (strain PR4 / NBRC 100887)</name>
    <dbReference type="NCBI Taxonomy" id="234621"/>
    <lineage>
        <taxon>Bacteria</taxon>
        <taxon>Bacillati</taxon>
        <taxon>Actinomycetota</taxon>
        <taxon>Actinomycetes</taxon>
        <taxon>Mycobacteriales</taxon>
        <taxon>Nocardiaceae</taxon>
        <taxon>Rhodococcus</taxon>
        <taxon>Rhodococcus erythropolis group</taxon>
    </lineage>
</organism>
<feature type="chain" id="PRO_1000213717" description="tRNA(Ile)-lysidine synthase">
    <location>
        <begin position="1"/>
        <end position="325"/>
    </location>
</feature>
<feature type="binding site" evidence="1">
    <location>
        <begin position="34"/>
        <end position="39"/>
    </location>
    <ligand>
        <name>ATP</name>
        <dbReference type="ChEBI" id="CHEBI:30616"/>
    </ligand>
</feature>